<organism>
    <name type="scientific">Pseudomonas aeruginosa (strain LESB58)</name>
    <dbReference type="NCBI Taxonomy" id="557722"/>
    <lineage>
        <taxon>Bacteria</taxon>
        <taxon>Pseudomonadati</taxon>
        <taxon>Pseudomonadota</taxon>
        <taxon>Gammaproteobacteria</taxon>
        <taxon>Pseudomonadales</taxon>
        <taxon>Pseudomonadaceae</taxon>
        <taxon>Pseudomonas</taxon>
    </lineage>
</organism>
<name>RS16_PSEA8</name>
<protein>
    <recommendedName>
        <fullName evidence="1">Small ribosomal subunit protein bS16</fullName>
    </recommendedName>
    <alternativeName>
        <fullName evidence="2">30S ribosomal protein S16</fullName>
    </alternativeName>
</protein>
<comment type="similarity">
    <text evidence="1">Belongs to the bacterial ribosomal protein bS16 family.</text>
</comment>
<sequence length="83" mass="9204">MVTIRLARGGSKKRPFYHLTVTNSRNARDGRFVERIGFFNPVATGGEVRLSVDQERATYWLGQGAQPSERVAQLLKDAAKANA</sequence>
<reference key="1">
    <citation type="journal article" date="2009" name="Genome Res.">
        <title>Newly introduced genomic prophage islands are critical determinants of in vivo competitiveness in the Liverpool epidemic strain of Pseudomonas aeruginosa.</title>
        <authorList>
            <person name="Winstanley C."/>
            <person name="Langille M.G.I."/>
            <person name="Fothergill J.L."/>
            <person name="Kukavica-Ibrulj I."/>
            <person name="Paradis-Bleau C."/>
            <person name="Sanschagrin F."/>
            <person name="Thomson N.R."/>
            <person name="Winsor G.L."/>
            <person name="Quail M.A."/>
            <person name="Lennard N."/>
            <person name="Bignell A."/>
            <person name="Clarke L."/>
            <person name="Seeger K."/>
            <person name="Saunders D."/>
            <person name="Harris D."/>
            <person name="Parkhill J."/>
            <person name="Hancock R.E.W."/>
            <person name="Brinkman F.S.L."/>
            <person name="Levesque R.C."/>
        </authorList>
    </citation>
    <scope>NUCLEOTIDE SEQUENCE [LARGE SCALE GENOMIC DNA]</scope>
    <source>
        <strain>LESB58</strain>
    </source>
</reference>
<proteinExistence type="inferred from homology"/>
<gene>
    <name evidence="1" type="primary">rpsP</name>
    <name type="ordered locus">PLES_12351</name>
</gene>
<evidence type="ECO:0000255" key="1">
    <source>
        <dbReference type="HAMAP-Rule" id="MF_00385"/>
    </source>
</evidence>
<evidence type="ECO:0000305" key="2"/>
<feature type="chain" id="PRO_1000196458" description="Small ribosomal subunit protein bS16">
    <location>
        <begin position="1"/>
        <end position="83"/>
    </location>
</feature>
<accession>B7UYK6</accession>
<keyword id="KW-0687">Ribonucleoprotein</keyword>
<keyword id="KW-0689">Ribosomal protein</keyword>
<dbReference type="EMBL" id="FM209186">
    <property type="protein sequence ID" value="CAW25962.1"/>
    <property type="molecule type" value="Genomic_DNA"/>
</dbReference>
<dbReference type="RefSeq" id="WP_003092643.1">
    <property type="nucleotide sequence ID" value="NC_011770.1"/>
</dbReference>
<dbReference type="SMR" id="B7UYK6"/>
<dbReference type="GeneID" id="77219761"/>
<dbReference type="KEGG" id="pag:PLES_12351"/>
<dbReference type="HOGENOM" id="CLU_100590_5_1_6"/>
<dbReference type="GO" id="GO:0005737">
    <property type="term" value="C:cytoplasm"/>
    <property type="evidence" value="ECO:0007669"/>
    <property type="project" value="UniProtKB-ARBA"/>
</dbReference>
<dbReference type="GO" id="GO:0015935">
    <property type="term" value="C:small ribosomal subunit"/>
    <property type="evidence" value="ECO:0007669"/>
    <property type="project" value="TreeGrafter"/>
</dbReference>
<dbReference type="GO" id="GO:0003735">
    <property type="term" value="F:structural constituent of ribosome"/>
    <property type="evidence" value="ECO:0007669"/>
    <property type="project" value="InterPro"/>
</dbReference>
<dbReference type="GO" id="GO:0006412">
    <property type="term" value="P:translation"/>
    <property type="evidence" value="ECO:0007669"/>
    <property type="project" value="UniProtKB-UniRule"/>
</dbReference>
<dbReference type="FunFam" id="3.30.1320.10:FF:000001">
    <property type="entry name" value="30S ribosomal protein S16"/>
    <property type="match status" value="1"/>
</dbReference>
<dbReference type="Gene3D" id="3.30.1320.10">
    <property type="match status" value="1"/>
</dbReference>
<dbReference type="HAMAP" id="MF_00385">
    <property type="entry name" value="Ribosomal_bS16"/>
    <property type="match status" value="1"/>
</dbReference>
<dbReference type="InterPro" id="IPR000307">
    <property type="entry name" value="Ribosomal_bS16"/>
</dbReference>
<dbReference type="InterPro" id="IPR023803">
    <property type="entry name" value="Ribosomal_bS16_dom_sf"/>
</dbReference>
<dbReference type="NCBIfam" id="TIGR00002">
    <property type="entry name" value="S16"/>
    <property type="match status" value="1"/>
</dbReference>
<dbReference type="PANTHER" id="PTHR12919">
    <property type="entry name" value="30S RIBOSOMAL PROTEIN S16"/>
    <property type="match status" value="1"/>
</dbReference>
<dbReference type="PANTHER" id="PTHR12919:SF20">
    <property type="entry name" value="SMALL RIBOSOMAL SUBUNIT PROTEIN BS16M"/>
    <property type="match status" value="1"/>
</dbReference>
<dbReference type="Pfam" id="PF00886">
    <property type="entry name" value="Ribosomal_S16"/>
    <property type="match status" value="1"/>
</dbReference>
<dbReference type="SUPFAM" id="SSF54565">
    <property type="entry name" value="Ribosomal protein S16"/>
    <property type="match status" value="1"/>
</dbReference>